<comment type="catalytic activity">
    <reaction evidence="2">
        <text>tRNA(Trp) + L-tryptophan + ATP = L-tryptophyl-tRNA(Trp) + AMP + diphosphate + H(+)</text>
        <dbReference type="Rhea" id="RHEA:24080"/>
        <dbReference type="Rhea" id="RHEA-COMP:9671"/>
        <dbReference type="Rhea" id="RHEA-COMP:9705"/>
        <dbReference type="ChEBI" id="CHEBI:15378"/>
        <dbReference type="ChEBI" id="CHEBI:30616"/>
        <dbReference type="ChEBI" id="CHEBI:33019"/>
        <dbReference type="ChEBI" id="CHEBI:57912"/>
        <dbReference type="ChEBI" id="CHEBI:78442"/>
        <dbReference type="ChEBI" id="CHEBI:78535"/>
        <dbReference type="ChEBI" id="CHEBI:456215"/>
        <dbReference type="EC" id="6.1.1.2"/>
    </reaction>
</comment>
<comment type="subunit">
    <text evidence="2">Homodimer.</text>
</comment>
<comment type="subcellular location">
    <subcellularLocation>
        <location evidence="2 5">Mitochondrion matrix</location>
    </subcellularLocation>
</comment>
<comment type="similarity">
    <text evidence="4">Belongs to the class-I aminoacyl-tRNA synthetase family.</text>
</comment>
<sequence>MAKLPKITSLLPHSRVVSGIQPTGIPHIGNYLGSLKQWVQLQEEAARTPFSKCFFFVADLHALTVPQDPLKFRQARLDMLAALLAIGINPQKSTLFFQSDVAQHSELAWLLACSTSMGQLNRMTQWKSKLHLHDHDDLSFLDASATSSTRFNLGLFSYPVLQAADILLYGATHIPVGKDQSQHVELTRSIARSFNSSYKEKILTVPDIILNSSSSIMALCQPEKKMSKSDINSKNYILLSDSTGEIRKKISRAQTDNIKGITYGDSNRPGINNLINIFAAISDSTPSDIAQANASCSNAEFKEKVSSAIIRCLQPISTSFNEWRQNRELLRDIAKKGAEEAVAEASSCMHKLKTLTGLSVY</sequence>
<keyword id="KW-0030">Aminoacyl-tRNA synthetase</keyword>
<keyword id="KW-0067">ATP-binding</keyword>
<keyword id="KW-0436">Ligase</keyword>
<keyword id="KW-0496">Mitochondrion</keyword>
<keyword id="KW-0547">Nucleotide-binding</keyword>
<keyword id="KW-0648">Protein biosynthesis</keyword>
<keyword id="KW-1185">Reference proteome</keyword>
<keyword id="KW-0809">Transit peptide</keyword>
<organism>
    <name type="scientific">Schizosaccharomyces pombe (strain 972 / ATCC 24843)</name>
    <name type="common">Fission yeast</name>
    <dbReference type="NCBI Taxonomy" id="284812"/>
    <lineage>
        <taxon>Eukaryota</taxon>
        <taxon>Fungi</taxon>
        <taxon>Dikarya</taxon>
        <taxon>Ascomycota</taxon>
        <taxon>Taphrinomycotina</taxon>
        <taxon>Schizosaccharomycetes</taxon>
        <taxon>Schizosaccharomycetales</taxon>
        <taxon>Schizosaccharomycetaceae</taxon>
        <taxon>Schizosaccharomyces</taxon>
    </lineage>
</organism>
<accession>O42875</accession>
<gene>
    <name evidence="7" type="primary">msw1</name>
    <name type="ORF">SPAC3G9.13c</name>
</gene>
<feature type="transit peptide" description="Mitochondrion" evidence="1">
    <location>
        <begin position="1"/>
        <end position="16"/>
    </location>
</feature>
<feature type="chain" id="PRO_0000314631" description="Tryptophan--tRNA ligase, mitochondrial">
    <location>
        <begin position="17"/>
        <end position="361"/>
    </location>
</feature>
<feature type="short sequence motif" description="'HIGH' region" evidence="4">
    <location>
        <begin position="22"/>
        <end position="30"/>
    </location>
</feature>
<feature type="short sequence motif" description="'KMSKS' region" evidence="4">
    <location>
        <begin position="225"/>
        <end position="229"/>
    </location>
</feature>
<feature type="binding site" evidence="3">
    <location>
        <position position="21"/>
    </location>
    <ligand>
        <name>ATP</name>
        <dbReference type="ChEBI" id="CHEBI:30616"/>
    </ligand>
</feature>
<feature type="binding site" evidence="3">
    <location>
        <begin position="27"/>
        <end position="30"/>
    </location>
    <ligand>
        <name>ATP</name>
        <dbReference type="ChEBI" id="CHEBI:30616"/>
    </ligand>
</feature>
<feature type="binding site" evidence="3">
    <location>
        <position position="165"/>
    </location>
    <ligand>
        <name>L-tryptophan</name>
        <dbReference type="ChEBI" id="CHEBI:57912"/>
    </ligand>
</feature>
<feature type="binding site" evidence="3">
    <location>
        <begin position="177"/>
        <end position="179"/>
    </location>
    <ligand>
        <name>ATP</name>
        <dbReference type="ChEBI" id="CHEBI:30616"/>
    </ligand>
</feature>
<feature type="binding site" evidence="3">
    <location>
        <begin position="225"/>
        <end position="229"/>
    </location>
    <ligand>
        <name>ATP</name>
        <dbReference type="ChEBI" id="CHEBI:30616"/>
    </ligand>
</feature>
<feature type="binding site" evidence="2">
    <location>
        <position position="228"/>
    </location>
    <ligand>
        <name>ATP</name>
        <dbReference type="ChEBI" id="CHEBI:30616"/>
    </ligand>
</feature>
<name>SYWM_SCHPO</name>
<evidence type="ECO:0000250" key="1"/>
<evidence type="ECO:0000250" key="2">
    <source>
        <dbReference type="UniProtKB" id="P04803"/>
    </source>
</evidence>
<evidence type="ECO:0000250" key="3">
    <source>
        <dbReference type="UniProtKB" id="Q9UGM6"/>
    </source>
</evidence>
<evidence type="ECO:0000255" key="4"/>
<evidence type="ECO:0000269" key="5">
    <source>
    </source>
</evidence>
<evidence type="ECO:0000305" key="6"/>
<evidence type="ECO:0000312" key="7">
    <source>
        <dbReference type="EMBL" id="CAA15922.1"/>
    </source>
</evidence>
<protein>
    <recommendedName>
        <fullName>Tryptophan--tRNA ligase, mitochondrial</fullName>
        <ecNumber>6.1.1.2</ecNumber>
    </recommendedName>
    <alternativeName>
        <fullName>Tryptophanyl-tRNA synthetase</fullName>
        <shortName>TrpRS</shortName>
    </alternativeName>
</protein>
<dbReference type="EC" id="6.1.1.2"/>
<dbReference type="EMBL" id="CU329670">
    <property type="protein sequence ID" value="CAA15922.1"/>
    <property type="molecule type" value="Genomic_DNA"/>
</dbReference>
<dbReference type="PIR" id="T11649">
    <property type="entry name" value="T11649"/>
</dbReference>
<dbReference type="RefSeq" id="NP_594085.1">
    <property type="nucleotide sequence ID" value="NM_001019500.2"/>
</dbReference>
<dbReference type="SMR" id="O42875"/>
<dbReference type="FunCoup" id="O42875">
    <property type="interactions" value="397"/>
</dbReference>
<dbReference type="STRING" id="284812.O42875"/>
<dbReference type="PaxDb" id="4896-SPAC3G9.13c.1"/>
<dbReference type="EnsemblFungi" id="SPAC3G9.13c.1">
    <property type="protein sequence ID" value="SPAC3G9.13c.1:pep"/>
    <property type="gene ID" value="SPAC3G9.13c"/>
</dbReference>
<dbReference type="GeneID" id="2543249"/>
<dbReference type="KEGG" id="spo:2543249"/>
<dbReference type="PomBase" id="SPAC3G9.13c">
    <property type="gene designation" value="msw1"/>
</dbReference>
<dbReference type="VEuPathDB" id="FungiDB:SPAC3G9.13c"/>
<dbReference type="eggNOG" id="KOG2713">
    <property type="taxonomic scope" value="Eukaryota"/>
</dbReference>
<dbReference type="HOGENOM" id="CLU_029244_1_3_1"/>
<dbReference type="InParanoid" id="O42875"/>
<dbReference type="OMA" id="GWGQFKP"/>
<dbReference type="PhylomeDB" id="O42875"/>
<dbReference type="PRO" id="PR:O42875"/>
<dbReference type="Proteomes" id="UP000002485">
    <property type="component" value="Chromosome I"/>
</dbReference>
<dbReference type="GO" id="GO:0005759">
    <property type="term" value="C:mitochondrial matrix"/>
    <property type="evidence" value="ECO:0000318"/>
    <property type="project" value="GO_Central"/>
</dbReference>
<dbReference type="GO" id="GO:0005739">
    <property type="term" value="C:mitochondrion"/>
    <property type="evidence" value="ECO:0007005"/>
    <property type="project" value="PomBase"/>
</dbReference>
<dbReference type="GO" id="GO:0005524">
    <property type="term" value="F:ATP binding"/>
    <property type="evidence" value="ECO:0000255"/>
    <property type="project" value="PomBase"/>
</dbReference>
<dbReference type="GO" id="GO:0004830">
    <property type="term" value="F:tryptophan-tRNA ligase activity"/>
    <property type="evidence" value="ECO:0000318"/>
    <property type="project" value="GO_Central"/>
</dbReference>
<dbReference type="GO" id="GO:0070183">
    <property type="term" value="P:mitochondrial tryptophanyl-tRNA aminoacylation"/>
    <property type="evidence" value="ECO:0000318"/>
    <property type="project" value="GO_Central"/>
</dbReference>
<dbReference type="CDD" id="cd00806">
    <property type="entry name" value="TrpRS_core"/>
    <property type="match status" value="1"/>
</dbReference>
<dbReference type="FunFam" id="1.10.240.10:FF:000002">
    <property type="entry name" value="Tryptophan--tRNA ligase"/>
    <property type="match status" value="1"/>
</dbReference>
<dbReference type="FunFam" id="3.40.50.620:FF:000144">
    <property type="entry name" value="Tryptophan--tRNA ligase"/>
    <property type="match status" value="1"/>
</dbReference>
<dbReference type="Gene3D" id="3.40.50.620">
    <property type="entry name" value="HUPs"/>
    <property type="match status" value="1"/>
</dbReference>
<dbReference type="Gene3D" id="1.10.240.10">
    <property type="entry name" value="Tyrosyl-Transfer RNA Synthetase"/>
    <property type="match status" value="1"/>
</dbReference>
<dbReference type="HAMAP" id="MF_00140_B">
    <property type="entry name" value="Trp_tRNA_synth_B"/>
    <property type="match status" value="1"/>
</dbReference>
<dbReference type="InterPro" id="IPR001412">
    <property type="entry name" value="aa-tRNA-synth_I_CS"/>
</dbReference>
<dbReference type="InterPro" id="IPR002305">
    <property type="entry name" value="aa-tRNA-synth_Ic"/>
</dbReference>
<dbReference type="InterPro" id="IPR014729">
    <property type="entry name" value="Rossmann-like_a/b/a_fold"/>
</dbReference>
<dbReference type="InterPro" id="IPR002306">
    <property type="entry name" value="Trp-tRNA-ligase"/>
</dbReference>
<dbReference type="InterPro" id="IPR024109">
    <property type="entry name" value="Trp-tRNA-ligase_bac-type"/>
</dbReference>
<dbReference type="InterPro" id="IPR050203">
    <property type="entry name" value="Trp-tRNA_synthetase"/>
</dbReference>
<dbReference type="NCBIfam" id="TIGR00233">
    <property type="entry name" value="trpS"/>
    <property type="match status" value="1"/>
</dbReference>
<dbReference type="PANTHER" id="PTHR43766">
    <property type="entry name" value="TRYPTOPHAN--TRNA LIGASE, MITOCHONDRIAL"/>
    <property type="match status" value="1"/>
</dbReference>
<dbReference type="PANTHER" id="PTHR43766:SF1">
    <property type="entry name" value="TRYPTOPHAN--TRNA LIGASE, MITOCHONDRIAL"/>
    <property type="match status" value="1"/>
</dbReference>
<dbReference type="Pfam" id="PF00579">
    <property type="entry name" value="tRNA-synt_1b"/>
    <property type="match status" value="1"/>
</dbReference>
<dbReference type="PRINTS" id="PR01039">
    <property type="entry name" value="TRNASYNTHTRP"/>
</dbReference>
<dbReference type="SUPFAM" id="SSF52374">
    <property type="entry name" value="Nucleotidylyl transferase"/>
    <property type="match status" value="1"/>
</dbReference>
<dbReference type="PROSITE" id="PS00178">
    <property type="entry name" value="AA_TRNA_LIGASE_I"/>
    <property type="match status" value="1"/>
</dbReference>
<proteinExistence type="inferred from homology"/>
<reference evidence="7" key="1">
    <citation type="journal article" date="2002" name="Nature">
        <title>The genome sequence of Schizosaccharomyces pombe.</title>
        <authorList>
            <person name="Wood V."/>
            <person name="Gwilliam R."/>
            <person name="Rajandream M.A."/>
            <person name="Lyne M.H."/>
            <person name="Lyne R."/>
            <person name="Stewart A."/>
            <person name="Sgouros J.G."/>
            <person name="Peat N."/>
            <person name="Hayles J."/>
            <person name="Baker S.G."/>
            <person name="Basham D."/>
            <person name="Bowman S."/>
            <person name="Brooks K."/>
            <person name="Brown D."/>
            <person name="Brown S."/>
            <person name="Chillingworth T."/>
            <person name="Churcher C.M."/>
            <person name="Collins M."/>
            <person name="Connor R."/>
            <person name="Cronin A."/>
            <person name="Davis P."/>
            <person name="Feltwell T."/>
            <person name="Fraser A."/>
            <person name="Gentles S."/>
            <person name="Goble A."/>
            <person name="Hamlin N."/>
            <person name="Harris D.E."/>
            <person name="Hidalgo J."/>
            <person name="Hodgson G."/>
            <person name="Holroyd S."/>
            <person name="Hornsby T."/>
            <person name="Howarth S."/>
            <person name="Huckle E.J."/>
            <person name="Hunt S."/>
            <person name="Jagels K."/>
            <person name="James K.D."/>
            <person name="Jones L."/>
            <person name="Jones M."/>
            <person name="Leather S."/>
            <person name="McDonald S."/>
            <person name="McLean J."/>
            <person name="Mooney P."/>
            <person name="Moule S."/>
            <person name="Mungall K.L."/>
            <person name="Murphy L.D."/>
            <person name="Niblett D."/>
            <person name="Odell C."/>
            <person name="Oliver K."/>
            <person name="O'Neil S."/>
            <person name="Pearson D."/>
            <person name="Quail M.A."/>
            <person name="Rabbinowitsch E."/>
            <person name="Rutherford K.M."/>
            <person name="Rutter S."/>
            <person name="Saunders D."/>
            <person name="Seeger K."/>
            <person name="Sharp S."/>
            <person name="Skelton J."/>
            <person name="Simmonds M.N."/>
            <person name="Squares R."/>
            <person name="Squares S."/>
            <person name="Stevens K."/>
            <person name="Taylor K."/>
            <person name="Taylor R.G."/>
            <person name="Tivey A."/>
            <person name="Walsh S.V."/>
            <person name="Warren T."/>
            <person name="Whitehead S."/>
            <person name="Woodward J.R."/>
            <person name="Volckaert G."/>
            <person name="Aert R."/>
            <person name="Robben J."/>
            <person name="Grymonprez B."/>
            <person name="Weltjens I."/>
            <person name="Vanstreels E."/>
            <person name="Rieger M."/>
            <person name="Schaefer M."/>
            <person name="Mueller-Auer S."/>
            <person name="Gabel C."/>
            <person name="Fuchs M."/>
            <person name="Duesterhoeft A."/>
            <person name="Fritzc C."/>
            <person name="Holzer E."/>
            <person name="Moestl D."/>
            <person name="Hilbert H."/>
            <person name="Borzym K."/>
            <person name="Langer I."/>
            <person name="Beck A."/>
            <person name="Lehrach H."/>
            <person name="Reinhardt R."/>
            <person name="Pohl T.M."/>
            <person name="Eger P."/>
            <person name="Zimmermann W."/>
            <person name="Wedler H."/>
            <person name="Wambutt R."/>
            <person name="Purnelle B."/>
            <person name="Goffeau A."/>
            <person name="Cadieu E."/>
            <person name="Dreano S."/>
            <person name="Gloux S."/>
            <person name="Lelaure V."/>
            <person name="Mottier S."/>
            <person name="Galibert F."/>
            <person name="Aves S.J."/>
            <person name="Xiang Z."/>
            <person name="Hunt C."/>
            <person name="Moore K."/>
            <person name="Hurst S.M."/>
            <person name="Lucas M."/>
            <person name="Rochet M."/>
            <person name="Gaillardin C."/>
            <person name="Tallada V.A."/>
            <person name="Garzon A."/>
            <person name="Thode G."/>
            <person name="Daga R.R."/>
            <person name="Cruzado L."/>
            <person name="Jimenez J."/>
            <person name="Sanchez M."/>
            <person name="del Rey F."/>
            <person name="Benito J."/>
            <person name="Dominguez A."/>
            <person name="Revuelta J.L."/>
            <person name="Moreno S."/>
            <person name="Armstrong J."/>
            <person name="Forsburg S.L."/>
            <person name="Cerutti L."/>
            <person name="Lowe T."/>
            <person name="McCombie W.R."/>
            <person name="Paulsen I."/>
            <person name="Potashkin J."/>
            <person name="Shpakovski G.V."/>
            <person name="Ussery D."/>
            <person name="Barrell B.G."/>
            <person name="Nurse P."/>
        </authorList>
    </citation>
    <scope>NUCLEOTIDE SEQUENCE [LARGE SCALE GENOMIC DNA]</scope>
    <source>
        <strain>972 / ATCC 24843</strain>
    </source>
</reference>
<reference evidence="6" key="2">
    <citation type="journal article" date="2006" name="Nat. Biotechnol.">
        <title>ORFeome cloning and global analysis of protein localization in the fission yeast Schizosaccharomyces pombe.</title>
        <authorList>
            <person name="Matsuyama A."/>
            <person name="Arai R."/>
            <person name="Yashiroda Y."/>
            <person name="Shirai A."/>
            <person name="Kamata A."/>
            <person name="Sekido S."/>
            <person name="Kobayashi Y."/>
            <person name="Hashimoto A."/>
            <person name="Hamamoto M."/>
            <person name="Hiraoka Y."/>
            <person name="Horinouchi S."/>
            <person name="Yoshida M."/>
        </authorList>
    </citation>
    <scope>SUBCELLULAR LOCATION [LARGE SCALE ANALYSIS]</scope>
</reference>